<accession>Q8N196</accession>
<keyword id="KW-0010">Activator</keyword>
<keyword id="KW-0963">Cytoplasm</keyword>
<keyword id="KW-0209">Deafness</keyword>
<keyword id="KW-0217">Developmental protein</keyword>
<keyword id="KW-0225">Disease variant</keyword>
<keyword id="KW-0238">DNA-binding</keyword>
<keyword id="KW-0371">Homeobox</keyword>
<keyword id="KW-0539">Nucleus</keyword>
<keyword id="KW-1267">Proteomics identification</keyword>
<keyword id="KW-1185">Reference proteome</keyword>
<keyword id="KW-0804">Transcription</keyword>
<keyword id="KW-0805">Transcription regulation</keyword>
<organism>
    <name type="scientific">Homo sapiens</name>
    <name type="common">Human</name>
    <dbReference type="NCBI Taxonomy" id="9606"/>
    <lineage>
        <taxon>Eukaryota</taxon>
        <taxon>Metazoa</taxon>
        <taxon>Chordata</taxon>
        <taxon>Craniata</taxon>
        <taxon>Vertebrata</taxon>
        <taxon>Euteleostomi</taxon>
        <taxon>Mammalia</taxon>
        <taxon>Eutheria</taxon>
        <taxon>Euarchontoglires</taxon>
        <taxon>Primates</taxon>
        <taxon>Haplorrhini</taxon>
        <taxon>Catarrhini</taxon>
        <taxon>Hominidae</taxon>
        <taxon>Homo</taxon>
    </lineage>
</organism>
<proteinExistence type="evidence at protein level"/>
<gene>
    <name type="primary">SIX5</name>
    <name type="synonym">DMAHP</name>
</gene>
<name>SIX5_HUMAN</name>
<comment type="function">
    <text evidence="1">Transcription factor that is thought to be involved in regulation of organogenesis. May be involved in determination and maintenance of retina formation. Binds a 5'-GGTGTCAG-3' motif present in the ARE regulatory element of ATP1A1. Binds a 5'-TCA[AG][AG]TTNC-3' motif present in the MEF3 element in the myogenin promoter, and in the IGFBP5 promoter (By similarity). Thought to be regulated by association with Dach and Eya proteins, and seems to be coactivated by EYA1, EYA2 and EYA3 (By similarity).</text>
</comment>
<comment type="subunit">
    <text evidence="1">Probably binds DNA dimer. Interacts with EYA3, and probably EYA1 and EYA2 (By similarity).</text>
</comment>
<comment type="interaction">
    <interactant intactId="EBI-946167">
        <id>Q8N196</id>
    </interactant>
    <interactant intactId="EBI-930964">
        <id>P54253</id>
        <label>ATXN1</label>
    </interactant>
    <organismsDiffer>false</organismsDiffer>
    <experiments>4</experiments>
</comment>
<comment type="subcellular location">
    <subcellularLocation>
        <location evidence="4">Cytoplasm</location>
    </subcellularLocation>
    <subcellularLocation>
        <location evidence="2 4">Nucleus</location>
    </subcellularLocation>
</comment>
<comment type="tissue specificity">
    <text evidence="6">Expressed in adult but not in fetal eyes. Found in corneal epithelium and endothelium, lens epithelium, ciliary body epithelia, cellular layers of the retina and the sclera.</text>
</comment>
<comment type="developmental stage">
    <text evidence="4">At the begin of fourth week of development detected in cytoplasm of somite cells, and at the end of fourth week is accumulated in the nucleus. Between the sixth and eighth week of development detected in the nucleus of limb bud cells.</text>
</comment>
<comment type="disease" evidence="5">
    <disease id="DI-01298">
        <name>Branchiootorenal syndrome 2</name>
        <acronym>BOR2</acronym>
        <description>A syndrome characterized by branchial cleft fistulas or cysts, sensorineural and/or conductive hearing loss, pre-auricular pits, structural defects of the outer, middle or inner ear, and renal malformations.</description>
        <dbReference type="MIM" id="610896"/>
    </disease>
    <text>The disease is caused by variants affecting the gene represented in this entry.</text>
</comment>
<comment type="similarity">
    <text evidence="7">Belongs to the SIX/Sine oculis homeobox family.</text>
</comment>
<comment type="sequence caution" evidence="7">
    <conflict type="miscellaneous discrepancy">
        <sequence resource="EMBL-CDS" id="AAH33204"/>
    </conflict>
    <text>Aberrant splicing.</text>
</comment>
<comment type="sequence caution" evidence="7">
    <conflict type="erroneous termination">
        <sequence resource="EMBL" id="AK074826"/>
    </conflict>
    <text>Truncated C-terminus.</text>
</comment>
<dbReference type="EMBL" id="X84813">
    <property type="status" value="NOT_ANNOTATED_CDS"/>
    <property type="molecule type" value="Genomic_DNA"/>
</dbReference>
<dbReference type="EMBL" id="AC074212">
    <property type="status" value="NOT_ANNOTATED_CDS"/>
    <property type="molecule type" value="Genomic_DNA"/>
</dbReference>
<dbReference type="EMBL" id="BC033204">
    <property type="protein sequence ID" value="AAH33204.1"/>
    <property type="status" value="ALT_SEQ"/>
    <property type="molecule type" value="mRNA"/>
</dbReference>
<dbReference type="EMBL" id="BU859227">
    <property type="status" value="NOT_ANNOTATED_CDS"/>
    <property type="molecule type" value="mRNA"/>
</dbReference>
<dbReference type="EMBL" id="AK074826">
    <property type="status" value="NOT_ANNOTATED_CDS"/>
    <property type="molecule type" value="mRNA"/>
</dbReference>
<dbReference type="CCDS" id="CCDS12673.1"/>
<dbReference type="RefSeq" id="NP_787071.2">
    <property type="nucleotide sequence ID" value="NM_175875.4"/>
</dbReference>
<dbReference type="SMR" id="Q8N196"/>
<dbReference type="BioGRID" id="127096">
    <property type="interactions" value="76"/>
</dbReference>
<dbReference type="FunCoup" id="Q8N196">
    <property type="interactions" value="1133"/>
</dbReference>
<dbReference type="IntAct" id="Q8N196">
    <property type="interactions" value="33"/>
</dbReference>
<dbReference type="MINT" id="Q8N196"/>
<dbReference type="STRING" id="9606.ENSP00000316842"/>
<dbReference type="GlyGen" id="Q8N196">
    <property type="glycosylation" value="2 sites, 1 O-linked glycan (1 site)"/>
</dbReference>
<dbReference type="iPTMnet" id="Q8N196"/>
<dbReference type="PhosphoSitePlus" id="Q8N196"/>
<dbReference type="BioMuta" id="SIX5"/>
<dbReference type="DMDM" id="150421671"/>
<dbReference type="jPOST" id="Q8N196"/>
<dbReference type="MassIVE" id="Q8N196"/>
<dbReference type="PaxDb" id="9606-ENSP00000316842"/>
<dbReference type="PeptideAtlas" id="Q8N196"/>
<dbReference type="ProteomicsDB" id="71575"/>
<dbReference type="Pumba" id="Q8N196"/>
<dbReference type="Antibodypedia" id="31386">
    <property type="antibodies" value="182 antibodies from 28 providers"/>
</dbReference>
<dbReference type="DNASU" id="147912"/>
<dbReference type="Ensembl" id="ENST00000317578.7">
    <property type="protein sequence ID" value="ENSP00000316842.4"/>
    <property type="gene ID" value="ENSG00000177045.11"/>
</dbReference>
<dbReference type="GeneID" id="147912"/>
<dbReference type="KEGG" id="hsa:147912"/>
<dbReference type="MANE-Select" id="ENST00000317578.7">
    <property type="protein sequence ID" value="ENSP00000316842.4"/>
    <property type="RefSeq nucleotide sequence ID" value="NM_175875.5"/>
    <property type="RefSeq protein sequence ID" value="NP_787071.3"/>
</dbReference>
<dbReference type="UCSC" id="uc002pdb.4">
    <property type="organism name" value="human"/>
</dbReference>
<dbReference type="AGR" id="HGNC:10891"/>
<dbReference type="CTD" id="147912"/>
<dbReference type="DisGeNET" id="147912"/>
<dbReference type="GeneCards" id="SIX5"/>
<dbReference type="GeneReviews" id="SIX5"/>
<dbReference type="HGNC" id="HGNC:10891">
    <property type="gene designation" value="SIX5"/>
</dbReference>
<dbReference type="HPA" id="ENSG00000177045">
    <property type="expression patterns" value="Low tissue specificity"/>
</dbReference>
<dbReference type="MalaCards" id="SIX5"/>
<dbReference type="MIM" id="600963">
    <property type="type" value="gene"/>
</dbReference>
<dbReference type="MIM" id="610896">
    <property type="type" value="phenotype"/>
</dbReference>
<dbReference type="neXtProt" id="NX_Q8N196"/>
<dbReference type="OpenTargets" id="ENSG00000177045"/>
<dbReference type="Orphanet" id="107">
    <property type="disease" value="BOR syndrome"/>
</dbReference>
<dbReference type="PharmGKB" id="PA35791"/>
<dbReference type="VEuPathDB" id="HostDB:ENSG00000177045"/>
<dbReference type="eggNOG" id="KOG0775">
    <property type="taxonomic scope" value="Eukaryota"/>
</dbReference>
<dbReference type="GeneTree" id="ENSGT00940000162237"/>
<dbReference type="HOGENOM" id="CLU_022250_0_0_1"/>
<dbReference type="InParanoid" id="Q8N196"/>
<dbReference type="OMA" id="AAMPIWP"/>
<dbReference type="OrthoDB" id="6159439at2759"/>
<dbReference type="PAN-GO" id="Q8N196">
    <property type="GO annotations" value="5 GO annotations based on evolutionary models"/>
</dbReference>
<dbReference type="PhylomeDB" id="Q8N196"/>
<dbReference type="TreeFam" id="TF315545"/>
<dbReference type="PathwayCommons" id="Q8N196"/>
<dbReference type="SignaLink" id="Q8N196"/>
<dbReference type="BioGRID-ORCS" id="147912">
    <property type="hits" value="18 hits in 1173 CRISPR screens"/>
</dbReference>
<dbReference type="GeneWiki" id="SIX5"/>
<dbReference type="GenomeRNAi" id="147912"/>
<dbReference type="Pharos" id="Q8N196">
    <property type="development level" value="Tbio"/>
</dbReference>
<dbReference type="PRO" id="PR:Q8N196"/>
<dbReference type="Proteomes" id="UP000005640">
    <property type="component" value="Chromosome 19"/>
</dbReference>
<dbReference type="RNAct" id="Q8N196">
    <property type="molecule type" value="protein"/>
</dbReference>
<dbReference type="Bgee" id="ENSG00000177045">
    <property type="expression patterns" value="Expressed in cardiac muscle of right atrium and 146 other cell types or tissues"/>
</dbReference>
<dbReference type="ExpressionAtlas" id="Q8N196">
    <property type="expression patterns" value="baseline and differential"/>
</dbReference>
<dbReference type="GO" id="GO:0000785">
    <property type="term" value="C:chromatin"/>
    <property type="evidence" value="ECO:0000247"/>
    <property type="project" value="NTNU_SB"/>
</dbReference>
<dbReference type="GO" id="GO:0005829">
    <property type="term" value="C:cytosol"/>
    <property type="evidence" value="ECO:0000314"/>
    <property type="project" value="HPA"/>
</dbReference>
<dbReference type="GO" id="GO:0005794">
    <property type="term" value="C:Golgi apparatus"/>
    <property type="evidence" value="ECO:0000314"/>
    <property type="project" value="HPA"/>
</dbReference>
<dbReference type="GO" id="GO:0043231">
    <property type="term" value="C:intracellular membrane-bounded organelle"/>
    <property type="evidence" value="ECO:0000314"/>
    <property type="project" value="HPA"/>
</dbReference>
<dbReference type="GO" id="GO:0005654">
    <property type="term" value="C:nucleoplasm"/>
    <property type="evidence" value="ECO:0000314"/>
    <property type="project" value="HPA"/>
</dbReference>
<dbReference type="GO" id="GO:0005634">
    <property type="term" value="C:nucleus"/>
    <property type="evidence" value="ECO:0000318"/>
    <property type="project" value="GO_Central"/>
</dbReference>
<dbReference type="GO" id="GO:0005667">
    <property type="term" value="C:transcription regulator complex"/>
    <property type="evidence" value="ECO:0000318"/>
    <property type="project" value="GO_Central"/>
</dbReference>
<dbReference type="GO" id="GO:0001228">
    <property type="term" value="F:DNA-binding transcription activator activity, RNA polymerase II-specific"/>
    <property type="evidence" value="ECO:0007669"/>
    <property type="project" value="Ensembl"/>
</dbReference>
<dbReference type="GO" id="GO:0000981">
    <property type="term" value="F:DNA-binding transcription factor activity, RNA polymerase II-specific"/>
    <property type="evidence" value="ECO:0000247"/>
    <property type="project" value="NTNU_SB"/>
</dbReference>
<dbReference type="GO" id="GO:0000978">
    <property type="term" value="F:RNA polymerase II cis-regulatory region sequence-specific DNA binding"/>
    <property type="evidence" value="ECO:0000318"/>
    <property type="project" value="GO_Central"/>
</dbReference>
<dbReference type="GO" id="GO:0002088">
    <property type="term" value="P:lens development in camera-type eye"/>
    <property type="evidence" value="ECO:0007669"/>
    <property type="project" value="Ensembl"/>
</dbReference>
<dbReference type="GO" id="GO:0160024">
    <property type="term" value="P:Leydig cell proliferation"/>
    <property type="evidence" value="ECO:0007669"/>
    <property type="project" value="Ensembl"/>
</dbReference>
<dbReference type="GO" id="GO:0045892">
    <property type="term" value="P:negative regulation of DNA-templated transcription"/>
    <property type="evidence" value="ECO:0007669"/>
    <property type="project" value="Ensembl"/>
</dbReference>
<dbReference type="GO" id="GO:1902723">
    <property type="term" value="P:negative regulation of skeletal muscle satellite cell proliferation"/>
    <property type="evidence" value="ECO:0007669"/>
    <property type="project" value="Ensembl"/>
</dbReference>
<dbReference type="GO" id="GO:0006357">
    <property type="term" value="P:regulation of transcription by RNA polymerase II"/>
    <property type="evidence" value="ECO:0000318"/>
    <property type="project" value="GO_Central"/>
</dbReference>
<dbReference type="GO" id="GO:0007286">
    <property type="term" value="P:spermatid development"/>
    <property type="evidence" value="ECO:0007669"/>
    <property type="project" value="Ensembl"/>
</dbReference>
<dbReference type="CDD" id="cd00086">
    <property type="entry name" value="homeodomain"/>
    <property type="match status" value="1"/>
</dbReference>
<dbReference type="FunFam" id="1.10.10.60:FF:000085">
    <property type="entry name" value="SIX homeobox 5"/>
    <property type="match status" value="1"/>
</dbReference>
<dbReference type="Gene3D" id="1.10.10.60">
    <property type="entry name" value="Homeodomain-like"/>
    <property type="match status" value="1"/>
</dbReference>
<dbReference type="InterPro" id="IPR001356">
    <property type="entry name" value="HD"/>
</dbReference>
<dbReference type="InterPro" id="IPR017970">
    <property type="entry name" value="Homeobox_CS"/>
</dbReference>
<dbReference type="InterPro" id="IPR009057">
    <property type="entry name" value="Homeodomain-like_sf"/>
</dbReference>
<dbReference type="InterPro" id="IPR031701">
    <property type="entry name" value="SIX1_SD"/>
</dbReference>
<dbReference type="PANTHER" id="PTHR10390">
    <property type="entry name" value="HOMEOBOX PROTEIN SIX"/>
    <property type="match status" value="1"/>
</dbReference>
<dbReference type="PANTHER" id="PTHR10390:SF40">
    <property type="entry name" value="HOMEOBOX PROTEIN SIX5"/>
    <property type="match status" value="1"/>
</dbReference>
<dbReference type="Pfam" id="PF00046">
    <property type="entry name" value="Homeodomain"/>
    <property type="match status" value="1"/>
</dbReference>
<dbReference type="Pfam" id="PF16878">
    <property type="entry name" value="SIX1_SD"/>
    <property type="match status" value="1"/>
</dbReference>
<dbReference type="SMART" id="SM00389">
    <property type="entry name" value="HOX"/>
    <property type="match status" value="1"/>
</dbReference>
<dbReference type="SUPFAM" id="SSF46689">
    <property type="entry name" value="Homeodomain-like"/>
    <property type="match status" value="1"/>
</dbReference>
<dbReference type="PROSITE" id="PS00027">
    <property type="entry name" value="HOMEOBOX_1"/>
    <property type="match status" value="1"/>
</dbReference>
<dbReference type="PROSITE" id="PS50071">
    <property type="entry name" value="HOMEOBOX_2"/>
    <property type="match status" value="1"/>
</dbReference>
<feature type="chain" id="PRO_0000049305" description="Homeobox protein SIX5">
    <location>
        <begin position="1"/>
        <end position="739"/>
    </location>
</feature>
<feature type="DNA-binding region" description="Homeobox" evidence="2">
    <location>
        <begin position="201"/>
        <end position="260"/>
    </location>
</feature>
<feature type="region of interest" description="Disordered" evidence="3">
    <location>
        <begin position="1"/>
        <end position="84"/>
    </location>
</feature>
<feature type="region of interest" description="Disordered" evidence="3">
    <location>
        <begin position="251"/>
        <end position="294"/>
    </location>
</feature>
<feature type="region of interest" description="Disordered" evidence="3">
    <location>
        <begin position="361"/>
        <end position="381"/>
    </location>
</feature>
<feature type="region of interest" description="Disordered" evidence="3">
    <location>
        <begin position="617"/>
        <end position="650"/>
    </location>
</feature>
<feature type="compositionally biased region" description="Low complexity" evidence="3">
    <location>
        <begin position="1"/>
        <end position="24"/>
    </location>
</feature>
<feature type="compositionally biased region" description="Low complexity" evidence="3">
    <location>
        <begin position="34"/>
        <end position="61"/>
    </location>
</feature>
<feature type="compositionally biased region" description="Low complexity" evidence="3">
    <location>
        <begin position="74"/>
        <end position="83"/>
    </location>
</feature>
<feature type="compositionally biased region" description="Basic and acidic residues" evidence="3">
    <location>
        <begin position="279"/>
        <end position="289"/>
    </location>
</feature>
<feature type="compositionally biased region" description="Low complexity" evidence="3">
    <location>
        <begin position="617"/>
        <end position="646"/>
    </location>
</feature>
<feature type="sequence variant" id="VAR_032941" description="In BOR2; affects Eya1 binding and the ability to activate gene transcription; dbSNP:rs80356461." evidence="5">
    <original>A</original>
    <variation>T</variation>
    <location>
        <position position="158"/>
    </location>
</feature>
<feature type="sequence variant" id="VAR_032942" description="In BOR2; dbSNP:rs80356462." evidence="5">
    <original>A</original>
    <variation>T</variation>
    <location>
        <position position="296"/>
    </location>
</feature>
<feature type="sequence variant" id="VAR_032943" description="In BOR2; dbSNP:rs80356463." evidence="5">
    <original>G</original>
    <variation>R</variation>
    <location>
        <position position="365"/>
    </location>
</feature>
<feature type="sequence variant" id="VAR_032944" description="In BOR2; affects Eya1 binding and the ability to activate gene transcription; dbSNP:rs80356464." evidence="5">
    <original>T</original>
    <variation>M</variation>
    <location>
        <position position="552"/>
    </location>
</feature>
<feature type="sequence variant" id="VAR_032945" description="In dbSNP:rs2014377.">
    <original>L</original>
    <variation>V</variation>
    <location>
        <position position="556"/>
    </location>
</feature>
<feature type="sequence variant" id="VAR_032946" description="In dbSNP:rs2014576.">
    <original>P</original>
    <variation>S</variation>
    <location>
        <position position="635"/>
    </location>
</feature>
<feature type="sequence variant" id="VAR_032947" description="In dbSNP:rs2341097.">
    <original>V</original>
    <variation>M</variation>
    <location>
        <position position="693"/>
    </location>
</feature>
<reference key="1">
    <citation type="journal article" date="1995" name="Hum. Mol. Genet.">
        <title>A novel homeodomain-encoding gene is associated with a large CpG island interrupted by the myotonic dystrophy unstable (CTG)n repeat.</title>
        <authorList>
            <person name="Boucher C.A."/>
            <person name="King S.K."/>
            <person name="Carey N."/>
            <person name="Krahe R."/>
            <person name="Winchester C.L."/>
            <person name="Rahman S."/>
            <person name="Creavin T."/>
            <person name="Meghji P."/>
            <person name="Bailey M.E."/>
            <person name="Chartier F.L."/>
            <person name="Brown S.D."/>
            <person name="Sicilliano M.J."/>
            <person name="Johnson K.J."/>
        </authorList>
    </citation>
    <scope>NUCLEOTIDE SEQUENCE [GENOMIC DNA]</scope>
</reference>
<reference key="2">
    <citation type="journal article" date="2004" name="Nature">
        <title>The DNA sequence and biology of human chromosome 19.</title>
        <authorList>
            <person name="Grimwood J."/>
            <person name="Gordon L.A."/>
            <person name="Olsen A.S."/>
            <person name="Terry A."/>
            <person name="Schmutz J."/>
            <person name="Lamerdin J.E."/>
            <person name="Hellsten U."/>
            <person name="Goodstein D."/>
            <person name="Couronne O."/>
            <person name="Tran-Gyamfi M."/>
            <person name="Aerts A."/>
            <person name="Altherr M."/>
            <person name="Ashworth L."/>
            <person name="Bajorek E."/>
            <person name="Black S."/>
            <person name="Branscomb E."/>
            <person name="Caenepeel S."/>
            <person name="Carrano A.V."/>
            <person name="Caoile C."/>
            <person name="Chan Y.M."/>
            <person name="Christensen M."/>
            <person name="Cleland C.A."/>
            <person name="Copeland A."/>
            <person name="Dalin E."/>
            <person name="Dehal P."/>
            <person name="Denys M."/>
            <person name="Detter J.C."/>
            <person name="Escobar J."/>
            <person name="Flowers D."/>
            <person name="Fotopulos D."/>
            <person name="Garcia C."/>
            <person name="Georgescu A.M."/>
            <person name="Glavina T."/>
            <person name="Gomez M."/>
            <person name="Gonzales E."/>
            <person name="Groza M."/>
            <person name="Hammon N."/>
            <person name="Hawkins T."/>
            <person name="Haydu L."/>
            <person name="Ho I."/>
            <person name="Huang W."/>
            <person name="Israni S."/>
            <person name="Jett J."/>
            <person name="Kadner K."/>
            <person name="Kimball H."/>
            <person name="Kobayashi A."/>
            <person name="Larionov V."/>
            <person name="Leem S.-H."/>
            <person name="Lopez F."/>
            <person name="Lou Y."/>
            <person name="Lowry S."/>
            <person name="Malfatti S."/>
            <person name="Martinez D."/>
            <person name="McCready P.M."/>
            <person name="Medina C."/>
            <person name="Morgan J."/>
            <person name="Nelson K."/>
            <person name="Nolan M."/>
            <person name="Ovcharenko I."/>
            <person name="Pitluck S."/>
            <person name="Pollard M."/>
            <person name="Popkie A.P."/>
            <person name="Predki P."/>
            <person name="Quan G."/>
            <person name="Ramirez L."/>
            <person name="Rash S."/>
            <person name="Retterer J."/>
            <person name="Rodriguez A."/>
            <person name="Rogers S."/>
            <person name="Salamov A."/>
            <person name="Salazar A."/>
            <person name="She X."/>
            <person name="Smith D."/>
            <person name="Slezak T."/>
            <person name="Solovyev V."/>
            <person name="Thayer N."/>
            <person name="Tice H."/>
            <person name="Tsai M."/>
            <person name="Ustaszewska A."/>
            <person name="Vo N."/>
            <person name="Wagner M."/>
            <person name="Wheeler J."/>
            <person name="Wu K."/>
            <person name="Xie G."/>
            <person name="Yang J."/>
            <person name="Dubchak I."/>
            <person name="Furey T.S."/>
            <person name="DeJong P."/>
            <person name="Dickson M."/>
            <person name="Gordon D."/>
            <person name="Eichler E.E."/>
            <person name="Pennacchio L.A."/>
            <person name="Richardson P."/>
            <person name="Stubbs L."/>
            <person name="Rokhsar D.S."/>
            <person name="Myers R.M."/>
            <person name="Rubin E.M."/>
            <person name="Lucas S.M."/>
        </authorList>
    </citation>
    <scope>NUCLEOTIDE SEQUENCE [LARGE SCALE GENOMIC DNA]</scope>
</reference>
<reference key="3">
    <citation type="journal article" date="2004" name="Genome Res.">
        <title>The status, quality, and expansion of the NIH full-length cDNA project: the Mammalian Gene Collection (MGC).</title>
        <authorList>
            <consortium name="The MGC Project Team"/>
        </authorList>
    </citation>
    <scope>NUCLEOTIDE SEQUENCE [LARGE SCALE MRNA]</scope>
    <source>
        <tissue>Eye</tissue>
    </source>
</reference>
<reference key="4">
    <citation type="journal article" date="2004" name="Nat. Genet.">
        <title>Complete sequencing and characterization of 21,243 full-length human cDNAs.</title>
        <authorList>
            <person name="Ota T."/>
            <person name="Suzuki Y."/>
            <person name="Nishikawa T."/>
            <person name="Otsuki T."/>
            <person name="Sugiyama T."/>
            <person name="Irie R."/>
            <person name="Wakamatsu A."/>
            <person name="Hayashi K."/>
            <person name="Sato H."/>
            <person name="Nagai K."/>
            <person name="Kimura K."/>
            <person name="Makita H."/>
            <person name="Sekine M."/>
            <person name="Obayashi M."/>
            <person name="Nishi T."/>
            <person name="Shibahara T."/>
            <person name="Tanaka T."/>
            <person name="Ishii S."/>
            <person name="Yamamoto J."/>
            <person name="Saito K."/>
            <person name="Kawai Y."/>
            <person name="Isono Y."/>
            <person name="Nakamura Y."/>
            <person name="Nagahari K."/>
            <person name="Murakami K."/>
            <person name="Yasuda T."/>
            <person name="Iwayanagi T."/>
            <person name="Wagatsuma M."/>
            <person name="Shiratori A."/>
            <person name="Sudo H."/>
            <person name="Hosoiri T."/>
            <person name="Kaku Y."/>
            <person name="Kodaira H."/>
            <person name="Kondo H."/>
            <person name="Sugawara M."/>
            <person name="Takahashi M."/>
            <person name="Kanda K."/>
            <person name="Yokoi T."/>
            <person name="Furuya T."/>
            <person name="Kikkawa E."/>
            <person name="Omura Y."/>
            <person name="Abe K."/>
            <person name="Kamihara K."/>
            <person name="Katsuta N."/>
            <person name="Sato K."/>
            <person name="Tanikawa M."/>
            <person name="Yamazaki M."/>
            <person name="Ninomiya K."/>
            <person name="Ishibashi T."/>
            <person name="Yamashita H."/>
            <person name="Murakawa K."/>
            <person name="Fujimori K."/>
            <person name="Tanai H."/>
            <person name="Kimata M."/>
            <person name="Watanabe M."/>
            <person name="Hiraoka S."/>
            <person name="Chiba Y."/>
            <person name="Ishida S."/>
            <person name="Ono Y."/>
            <person name="Takiguchi S."/>
            <person name="Watanabe S."/>
            <person name="Yosida M."/>
            <person name="Hotuta T."/>
            <person name="Kusano J."/>
            <person name="Kanehori K."/>
            <person name="Takahashi-Fujii A."/>
            <person name="Hara H."/>
            <person name="Tanase T.-O."/>
            <person name="Nomura Y."/>
            <person name="Togiya S."/>
            <person name="Komai F."/>
            <person name="Hara R."/>
            <person name="Takeuchi K."/>
            <person name="Arita M."/>
            <person name="Imose N."/>
            <person name="Musashino K."/>
            <person name="Yuuki H."/>
            <person name="Oshima A."/>
            <person name="Sasaki N."/>
            <person name="Aotsuka S."/>
            <person name="Yoshikawa Y."/>
            <person name="Matsunawa H."/>
            <person name="Ichihara T."/>
            <person name="Shiohata N."/>
            <person name="Sano S."/>
            <person name="Moriya S."/>
            <person name="Momiyama H."/>
            <person name="Satoh N."/>
            <person name="Takami S."/>
            <person name="Terashima Y."/>
            <person name="Suzuki O."/>
            <person name="Nakagawa S."/>
            <person name="Senoh A."/>
            <person name="Mizoguchi H."/>
            <person name="Goto Y."/>
            <person name="Shimizu F."/>
            <person name="Wakebe H."/>
            <person name="Hishigaki H."/>
            <person name="Watanabe T."/>
            <person name="Sugiyama A."/>
            <person name="Takemoto M."/>
            <person name="Kawakami B."/>
            <person name="Yamazaki M."/>
            <person name="Watanabe K."/>
            <person name="Kumagai A."/>
            <person name="Itakura S."/>
            <person name="Fukuzumi Y."/>
            <person name="Fujimori Y."/>
            <person name="Komiyama M."/>
            <person name="Tashiro H."/>
            <person name="Tanigami A."/>
            <person name="Fujiwara T."/>
            <person name="Ono T."/>
            <person name="Yamada K."/>
            <person name="Fujii Y."/>
            <person name="Ozaki K."/>
            <person name="Hirao M."/>
            <person name="Ohmori Y."/>
            <person name="Kawabata A."/>
            <person name="Hikiji T."/>
            <person name="Kobatake N."/>
            <person name="Inagaki H."/>
            <person name="Ikema Y."/>
            <person name="Okamoto S."/>
            <person name="Okitani R."/>
            <person name="Kawakami T."/>
            <person name="Noguchi S."/>
            <person name="Itoh T."/>
            <person name="Shigeta K."/>
            <person name="Senba T."/>
            <person name="Matsumura K."/>
            <person name="Nakajima Y."/>
            <person name="Mizuno T."/>
            <person name="Morinaga M."/>
            <person name="Sasaki M."/>
            <person name="Togashi T."/>
            <person name="Oyama M."/>
            <person name="Hata H."/>
            <person name="Watanabe M."/>
            <person name="Komatsu T."/>
            <person name="Mizushima-Sugano J."/>
            <person name="Satoh T."/>
            <person name="Shirai Y."/>
            <person name="Takahashi Y."/>
            <person name="Nakagawa K."/>
            <person name="Okumura K."/>
            <person name="Nagase T."/>
            <person name="Nomura N."/>
            <person name="Kikuchi H."/>
            <person name="Masuho Y."/>
            <person name="Yamashita R."/>
            <person name="Nakai K."/>
            <person name="Yada T."/>
            <person name="Nakamura Y."/>
            <person name="Ohara O."/>
            <person name="Isogai T."/>
            <person name="Sugano S."/>
        </authorList>
    </citation>
    <scope>NUCLEOTIDE SEQUENCE [LARGE SCALE MRNA] OF 185-739</scope>
</reference>
<reference key="5">
    <citation type="journal article" date="1999" name="Hum. Mol. Genet.">
        <title>Characterization of the expression of DMPK and SIX5 in the human eye and implications for pathogenesis in myotonic dystrophy.</title>
        <authorList>
            <person name="Winchester C.L."/>
            <person name="Ferrier R.K."/>
            <person name="Sermoni A."/>
            <person name="Clark B.J."/>
            <person name="Johnson K.J."/>
        </authorList>
    </citation>
    <scope>TISSUE SPECIFICITY</scope>
</reference>
<reference key="6">
    <citation type="journal article" date="2000" name="Nucleic Acids Res.">
        <title>Functional analysis of the homeodomain protein SIX5.</title>
        <authorList>
            <person name="Harris S.E."/>
            <person name="Winchester C.L."/>
            <person name="Johnson K.J."/>
        </authorList>
    </citation>
    <scope>DNA-BINDING</scope>
</reference>
<reference key="7">
    <citation type="journal article" date="2002" name="J. Muscle Res. Cell Motil.">
        <title>Six and Eya expression during human somitogenesis and MyoD gene family activation.</title>
        <authorList>
            <person name="Fougerousse F."/>
            <person name="Durand M."/>
            <person name="Lopez S."/>
            <person name="Suel L."/>
            <person name="Demignon J."/>
            <person name="Thornton C."/>
            <person name="Ozaki H."/>
            <person name="Kawakami K."/>
            <person name="Barbet P."/>
            <person name="Beckmann J.S."/>
            <person name="Maire P."/>
        </authorList>
    </citation>
    <scope>SUBCELLULAR LOCATION</scope>
    <scope>DEVELOPMENTAL STAGE</scope>
</reference>
<reference key="8">
    <citation type="journal article" date="2007" name="Am. J. Hum. Genet.">
        <title>Transcription factor SIX5 is mutated in patients with branchio-oto-renal syndrome.</title>
        <authorList>
            <person name="Hoskins B.E."/>
            <person name="Cramer C.H."/>
            <person name="Silvius D."/>
            <person name="Zou D."/>
            <person name="Raymond R.M."/>
            <person name="Orten D.J."/>
            <person name="Kimberling W.J."/>
            <person name="Smith R.J.H."/>
            <person name="Weil D."/>
            <person name="Petit C."/>
            <person name="Otto E.A."/>
            <person name="Xu P.-X."/>
            <person name="Hildebrandt F."/>
        </authorList>
    </citation>
    <scope>VARIANTS BOR2 THR-158; THR-296; ARG-365 AND MET-552</scope>
    <scope>CHARACTERIZATION OF VARIANTS BOR2 THR-158 AND MET-552</scope>
</reference>
<evidence type="ECO:0000250" key="1"/>
<evidence type="ECO:0000255" key="2">
    <source>
        <dbReference type="PROSITE-ProRule" id="PRU00108"/>
    </source>
</evidence>
<evidence type="ECO:0000256" key="3">
    <source>
        <dbReference type="SAM" id="MobiDB-lite"/>
    </source>
</evidence>
<evidence type="ECO:0000269" key="4">
    <source>
    </source>
</evidence>
<evidence type="ECO:0000269" key="5">
    <source>
    </source>
</evidence>
<evidence type="ECO:0000269" key="6">
    <source>
    </source>
</evidence>
<evidence type="ECO:0000305" key="7"/>
<protein>
    <recommendedName>
        <fullName>Homeobox protein SIX5</fullName>
    </recommendedName>
    <alternativeName>
        <fullName>DM locus-associated homeodomain protein</fullName>
    </alternativeName>
    <alternativeName>
        <fullName>Sine oculis homeobox homolog 5</fullName>
    </alternativeName>
</protein>
<sequence>MATLPAEPSAGPAAGGEAVAAAAATEEEEEEARQLLQTLQAAEGEAAAAAGAGAGAAAAGAEGPGSPGVPGSPPEAASEPPTGLRFSPEQVACVCEALLQAGHAGRLSRFLGALPPAERLRGSDPVLRARALVAFQRGEYAELYRLLESRPFPAAHHAFLQDLYLRARYHEAERARGRALGAVDKYRLRKKFPLPKTIWDGEETVYCFKERSRAALKACYRGNRYPTPDEKRRLATLTGLSLTQVSNWFKNRRQRDRTGAGGGAPCKSESDGNPTTEDESSRSPEDLERGAAPVSAEAAAQGSIFLAGTGPPAPCPASSSILVNGSFLAASGSPAVLLNGGPVIINGLALGEASSLGPLLLTGGGGAPPPQPSPQGASETKTSLVLDPQTGEVRLEEAQSEAPETKGAQVAAPGPALGEEVLGPLAQVVPGPPTAATFPLPPGPVPAVAAPQVVPLSPPPGYPTGLSPTSPLLNLPQVVPTSQVVTLPQAVGPLQLLAAGPGSPVKVAAAAGPANVHLINSGVGVTALQLPSATAPGNFLLANPVSGSPIVTGVALQQGKIILTATFPTSMLVSQVLPPAPGLALPLKPETAISVPEGGLPVAPSPALPEAHALGTLSAQQPPPAAATTSSTSLPFSPDSPGLLPNFPAPPPEGLMLSPAAVPVWSAGLELSAGTEGLLEAEKGLGTQAPHTVLRLPDPDPEGLLLGATAGGEVDEGLEAEAKVLTQLQSVPVEEPLEL</sequence>